<proteinExistence type="evidence at transcript level"/>
<gene>
    <name evidence="7" type="primary">boka</name>
    <name evidence="7" type="synonym">bok</name>
    <name type="ORF">zgc:100979</name>
</gene>
<protein>
    <recommendedName>
        <fullName evidence="5">Bcl-2-related ovarian killer protein homolog A</fullName>
        <shortName>zBok1</shortName>
    </recommendedName>
</protein>
<feature type="chain" id="PRO_0000283818" description="Bcl-2-related ovarian killer protein homolog A">
    <location>
        <begin position="1"/>
        <end position="221"/>
    </location>
</feature>
<feature type="transmembrane region" description="Helical" evidence="3">
    <location>
        <begin position="198"/>
        <end position="218"/>
    </location>
</feature>
<feature type="short sequence motif" description="BH4" evidence="3">
    <location>
        <begin position="32"/>
        <end position="44"/>
    </location>
</feature>
<feature type="short sequence motif" description="BH3" evidence="3">
    <location>
        <begin position="64"/>
        <end position="80"/>
    </location>
</feature>
<feature type="short sequence motif" description="BH1" evidence="3">
    <location>
        <begin position="110"/>
        <end position="140"/>
    </location>
</feature>
<feature type="short sequence motif" description="BH2" evidence="3">
    <location>
        <begin position="173"/>
        <end position="187"/>
    </location>
</feature>
<name>BOKA_DANRE</name>
<organism>
    <name type="scientific">Danio rerio</name>
    <name type="common">Zebrafish</name>
    <name type="synonym">Brachydanio rerio</name>
    <dbReference type="NCBI Taxonomy" id="7955"/>
    <lineage>
        <taxon>Eukaryota</taxon>
        <taxon>Metazoa</taxon>
        <taxon>Chordata</taxon>
        <taxon>Craniata</taxon>
        <taxon>Vertebrata</taxon>
        <taxon>Euteleostomi</taxon>
        <taxon>Actinopterygii</taxon>
        <taxon>Neopterygii</taxon>
        <taxon>Teleostei</taxon>
        <taxon>Ostariophysi</taxon>
        <taxon>Cypriniformes</taxon>
        <taxon>Danionidae</taxon>
        <taxon>Danioninae</taxon>
        <taxon>Danio</taxon>
    </lineage>
</organism>
<reference evidence="6" key="1">
    <citation type="submission" date="2004-07" db="EMBL/GenBank/DDBJ databases">
        <authorList>
            <consortium name="NIH - Zebrafish Gene Collection (ZGC) project"/>
        </authorList>
    </citation>
    <scope>NUCLEOTIDE SEQUENCE [LARGE SCALE MRNA]</scope>
    <source>
        <tissue evidence="6">Embryo</tissue>
    </source>
</reference>
<reference evidence="5" key="2">
    <citation type="journal article" date="2006" name="Cell Death Differ.">
        <title>Functional characterization of the Bcl-2 gene family in the zebrafish.</title>
        <authorList>
            <person name="Kratz E."/>
            <person name="Eimon P.M."/>
            <person name="Mukhyala K."/>
            <person name="Stern H."/>
            <person name="Zha J."/>
            <person name="Strasser A."/>
            <person name="Hart R."/>
            <person name="Ashkenazi A."/>
        </authorList>
    </citation>
    <scope>FUNCTION</scope>
    <scope>DEVELOPMENTAL STAGE</scope>
    <scope>TISSUE SPECIFICITY</scope>
</reference>
<comment type="function">
    <text evidence="4">May play a role in apoptosis. Does not appear to show pro-apoptotic activity when expressed ectopically in early embryos.</text>
</comment>
<comment type="subcellular location">
    <subcellularLocation>
        <location evidence="2">Membrane</location>
        <topology evidence="1">Single-pass membrane protein</topology>
    </subcellularLocation>
</comment>
<comment type="tissue specificity">
    <text evidence="4">Strongest expression in ovary and eye, weaker expression in gut, kidney and brain. Little expression in liver or heart.</text>
</comment>
<comment type="developmental stage">
    <text evidence="4">Not expressed maternally. Zygotic expression from 24-72 hours post-fertilization (hpf). Also expressed in adult.</text>
</comment>
<comment type="similarity">
    <text evidence="3">Belongs to the Bcl-2 family.</text>
</comment>
<dbReference type="EMBL" id="BC078217">
    <property type="protein sequence ID" value="AAH78217.1"/>
    <property type="molecule type" value="mRNA"/>
</dbReference>
<dbReference type="SMR" id="Q6DC66"/>
<dbReference type="FunCoup" id="Q6DC66">
    <property type="interactions" value="1792"/>
</dbReference>
<dbReference type="STRING" id="7955.ENSDARP00000123964"/>
<dbReference type="PaxDb" id="7955-ENSDARP00000123964"/>
<dbReference type="AGR" id="ZFIN:ZDB-GENE-040801-131"/>
<dbReference type="ZFIN" id="ZDB-GENE-040801-131">
    <property type="gene designation" value="boka"/>
</dbReference>
<dbReference type="eggNOG" id="KOG4728">
    <property type="taxonomic scope" value="Eukaryota"/>
</dbReference>
<dbReference type="InParanoid" id="Q6DC66"/>
<dbReference type="PhylomeDB" id="Q6DC66"/>
<dbReference type="ChiTaRS" id="boka">
    <property type="organism name" value="zebrafish"/>
</dbReference>
<dbReference type="PRO" id="PR:Q6DC66"/>
<dbReference type="Proteomes" id="UP000000437">
    <property type="component" value="Unplaced"/>
</dbReference>
<dbReference type="GO" id="GO:0005741">
    <property type="term" value="C:mitochondrial outer membrane"/>
    <property type="evidence" value="ECO:0000318"/>
    <property type="project" value="GO_Central"/>
</dbReference>
<dbReference type="GO" id="GO:0015267">
    <property type="term" value="F:channel activity"/>
    <property type="evidence" value="ECO:0000318"/>
    <property type="project" value="GO_Central"/>
</dbReference>
<dbReference type="GO" id="GO:0006915">
    <property type="term" value="P:apoptotic process"/>
    <property type="evidence" value="ECO:0007669"/>
    <property type="project" value="UniProtKB-KW"/>
</dbReference>
<dbReference type="GO" id="GO:0042981">
    <property type="term" value="P:regulation of apoptotic process"/>
    <property type="evidence" value="ECO:0007669"/>
    <property type="project" value="InterPro"/>
</dbReference>
<dbReference type="CDD" id="cd06845">
    <property type="entry name" value="Bcl-2_like"/>
    <property type="match status" value="1"/>
</dbReference>
<dbReference type="FunFam" id="1.10.437.10:FF:000005">
    <property type="entry name" value="bcl-2-related ovarian killer protein"/>
    <property type="match status" value="1"/>
</dbReference>
<dbReference type="Gene3D" id="1.10.437.10">
    <property type="entry name" value="Blc2-like"/>
    <property type="match status" value="1"/>
</dbReference>
<dbReference type="InterPro" id="IPR036834">
    <property type="entry name" value="Bcl-2-like_sf"/>
</dbReference>
<dbReference type="InterPro" id="IPR046371">
    <property type="entry name" value="Bcl-2_BH1-3"/>
</dbReference>
<dbReference type="InterPro" id="IPR026298">
    <property type="entry name" value="Bcl-2_fam"/>
</dbReference>
<dbReference type="InterPro" id="IPR002475">
    <property type="entry name" value="Bcl2-like"/>
</dbReference>
<dbReference type="PANTHER" id="PTHR11256">
    <property type="entry name" value="BCL-2 RELATED"/>
    <property type="match status" value="1"/>
</dbReference>
<dbReference type="PANTHER" id="PTHR11256:SF48">
    <property type="entry name" value="BCL-2-RELATED OVARIAN KILLER PROTEIN"/>
    <property type="match status" value="1"/>
</dbReference>
<dbReference type="Pfam" id="PF00452">
    <property type="entry name" value="Bcl-2"/>
    <property type="match status" value="1"/>
</dbReference>
<dbReference type="SMART" id="SM00337">
    <property type="entry name" value="BCL"/>
    <property type="match status" value="1"/>
</dbReference>
<dbReference type="SUPFAM" id="SSF56854">
    <property type="entry name" value="Bcl-2 inhibitors of programmed cell death"/>
    <property type="match status" value="1"/>
</dbReference>
<dbReference type="PROSITE" id="PS50062">
    <property type="entry name" value="BCL2_FAMILY"/>
    <property type="match status" value="1"/>
</dbReference>
<sequence length="221" mass="24599">MEMLRRSSVFAAEVMEVFDRSPTDKELVSQSKVLCRDYIHSRLHRAGIGWSKPEHGSGGTLAEVSSVLLWLGDELEYLRPNVYRNVARQLNITIASENIVSDAFLAVAAEIFSTEYSRKGLEKHKGVTWGKIVSLYAVAGALAVDCVRNGHPAMVHTIVDCMGEFVRKSLASWLKKRGGWADITKCVVSTDPSFHSHWLVTAACACGHYLKAVVFYLLREK</sequence>
<evidence type="ECO:0000250" key="1">
    <source>
        <dbReference type="UniProtKB" id="O35425"/>
    </source>
</evidence>
<evidence type="ECO:0000250" key="2">
    <source>
        <dbReference type="UniProtKB" id="Q9UMX3"/>
    </source>
</evidence>
<evidence type="ECO:0000255" key="3"/>
<evidence type="ECO:0000269" key="4">
    <source>
    </source>
</evidence>
<evidence type="ECO:0000305" key="5"/>
<evidence type="ECO:0000312" key="6">
    <source>
        <dbReference type="EMBL" id="AAH78217.1"/>
    </source>
</evidence>
<evidence type="ECO:0000312" key="7">
    <source>
        <dbReference type="ZFIN" id="ZDB-GENE-040801-131"/>
    </source>
</evidence>
<keyword id="KW-0053">Apoptosis</keyword>
<keyword id="KW-0472">Membrane</keyword>
<keyword id="KW-1185">Reference proteome</keyword>
<keyword id="KW-0812">Transmembrane</keyword>
<keyword id="KW-1133">Transmembrane helix</keyword>
<accession>Q6DC66</accession>